<keyword id="KW-0488">Methylation</keyword>
<keyword id="KW-0687">Ribonucleoprotein</keyword>
<keyword id="KW-0689">Ribosomal protein</keyword>
<keyword id="KW-0694">RNA-binding</keyword>
<keyword id="KW-0699">rRNA-binding</keyword>
<keyword id="KW-0820">tRNA-binding</keyword>
<name>RS12_CLOBJ</name>
<comment type="function">
    <text evidence="2">With S4 and S5 plays an important role in translational accuracy.</text>
</comment>
<comment type="function">
    <text evidence="2">Interacts with and stabilizes bases of the 16S rRNA that are involved in tRNA selection in the A site and with the mRNA backbone. Located at the interface of the 30S and 50S subunits, it traverses the body of the 30S subunit contacting proteins on the other side and probably holding the rRNA structure together. The combined cluster of proteins S8, S12 and S17 appears to hold together the shoulder and platform of the 30S subunit.</text>
</comment>
<comment type="subunit">
    <text evidence="2">Part of the 30S ribosomal subunit. Contacts proteins S8 and S17. May interact with IF1 in the 30S initiation complex.</text>
</comment>
<comment type="similarity">
    <text evidence="2">Belongs to the universal ribosomal protein uS12 family.</text>
</comment>
<reference key="1">
    <citation type="submission" date="2008-10" db="EMBL/GenBank/DDBJ databases">
        <title>Genome sequence of Clostridium botulinum A2 Kyoto.</title>
        <authorList>
            <person name="Shrivastava S."/>
            <person name="Brinkac L.M."/>
            <person name="Brown J.L."/>
            <person name="Bruce D."/>
            <person name="Detter C.C."/>
            <person name="Johnson E.A."/>
            <person name="Munk C.A."/>
            <person name="Smith L.A."/>
            <person name="Smith T.J."/>
            <person name="Sutton G."/>
            <person name="Brettin T.S."/>
        </authorList>
    </citation>
    <scope>NUCLEOTIDE SEQUENCE [LARGE SCALE GENOMIC DNA]</scope>
    <source>
        <strain>Kyoto / Type A2</strain>
    </source>
</reference>
<feature type="chain" id="PRO_1000134625" description="Small ribosomal subunit protein uS12">
    <location>
        <begin position="1"/>
        <end position="125"/>
    </location>
</feature>
<feature type="modified residue" description="3-methylthioaspartic acid" evidence="1">
    <location>
        <position position="89"/>
    </location>
</feature>
<organism>
    <name type="scientific">Clostridium botulinum (strain Kyoto / Type A2)</name>
    <dbReference type="NCBI Taxonomy" id="536232"/>
    <lineage>
        <taxon>Bacteria</taxon>
        <taxon>Bacillati</taxon>
        <taxon>Bacillota</taxon>
        <taxon>Clostridia</taxon>
        <taxon>Eubacteriales</taxon>
        <taxon>Clostridiaceae</taxon>
        <taxon>Clostridium</taxon>
    </lineage>
</organism>
<gene>
    <name evidence="2" type="primary">rpsL</name>
    <name type="ordered locus">CLM_3953</name>
</gene>
<accession>C1FMV6</accession>
<proteinExistence type="inferred from homology"/>
<evidence type="ECO:0000250" key="1"/>
<evidence type="ECO:0000255" key="2">
    <source>
        <dbReference type="HAMAP-Rule" id="MF_00403"/>
    </source>
</evidence>
<evidence type="ECO:0000305" key="3"/>
<protein>
    <recommendedName>
        <fullName evidence="2">Small ribosomal subunit protein uS12</fullName>
    </recommendedName>
    <alternativeName>
        <fullName evidence="3">30S ribosomal protein S12</fullName>
    </alternativeName>
</protein>
<sequence length="125" mass="13614">MPTISQLVRKGRKTIASASDSPALKECPQKRGVCTVVKTTTPKKPNSALRKVARIRLTNGYEVTAYIPGVGHNLQEHSVVLIRGGRVKDLPGVRYHIVRGALDAAGVANRMQSRSKYGAKKPKQK</sequence>
<dbReference type="EMBL" id="CP001581">
    <property type="protein sequence ID" value="ACO84124.1"/>
    <property type="molecule type" value="Genomic_DNA"/>
</dbReference>
<dbReference type="RefSeq" id="WP_003357676.1">
    <property type="nucleotide sequence ID" value="NC_012563.1"/>
</dbReference>
<dbReference type="SMR" id="C1FMV6"/>
<dbReference type="GeneID" id="92940255"/>
<dbReference type="KEGG" id="cby:CLM_3953"/>
<dbReference type="eggNOG" id="COG0048">
    <property type="taxonomic scope" value="Bacteria"/>
</dbReference>
<dbReference type="HOGENOM" id="CLU_104295_1_2_9"/>
<dbReference type="Proteomes" id="UP000001374">
    <property type="component" value="Chromosome"/>
</dbReference>
<dbReference type="GO" id="GO:0015935">
    <property type="term" value="C:small ribosomal subunit"/>
    <property type="evidence" value="ECO:0007669"/>
    <property type="project" value="InterPro"/>
</dbReference>
<dbReference type="GO" id="GO:0019843">
    <property type="term" value="F:rRNA binding"/>
    <property type="evidence" value="ECO:0007669"/>
    <property type="project" value="UniProtKB-UniRule"/>
</dbReference>
<dbReference type="GO" id="GO:0003735">
    <property type="term" value="F:structural constituent of ribosome"/>
    <property type="evidence" value="ECO:0007669"/>
    <property type="project" value="InterPro"/>
</dbReference>
<dbReference type="GO" id="GO:0000049">
    <property type="term" value="F:tRNA binding"/>
    <property type="evidence" value="ECO:0007669"/>
    <property type="project" value="UniProtKB-UniRule"/>
</dbReference>
<dbReference type="GO" id="GO:0006412">
    <property type="term" value="P:translation"/>
    <property type="evidence" value="ECO:0007669"/>
    <property type="project" value="UniProtKB-UniRule"/>
</dbReference>
<dbReference type="CDD" id="cd03368">
    <property type="entry name" value="Ribosomal_S12"/>
    <property type="match status" value="1"/>
</dbReference>
<dbReference type="FunFam" id="2.40.50.140:FF:000001">
    <property type="entry name" value="30S ribosomal protein S12"/>
    <property type="match status" value="1"/>
</dbReference>
<dbReference type="Gene3D" id="2.40.50.140">
    <property type="entry name" value="Nucleic acid-binding proteins"/>
    <property type="match status" value="1"/>
</dbReference>
<dbReference type="HAMAP" id="MF_00403_B">
    <property type="entry name" value="Ribosomal_uS12_B"/>
    <property type="match status" value="1"/>
</dbReference>
<dbReference type="InterPro" id="IPR012340">
    <property type="entry name" value="NA-bd_OB-fold"/>
</dbReference>
<dbReference type="InterPro" id="IPR006032">
    <property type="entry name" value="Ribosomal_uS12"/>
</dbReference>
<dbReference type="InterPro" id="IPR005679">
    <property type="entry name" value="Ribosomal_uS12_bac"/>
</dbReference>
<dbReference type="NCBIfam" id="TIGR00981">
    <property type="entry name" value="rpsL_bact"/>
    <property type="match status" value="1"/>
</dbReference>
<dbReference type="PANTHER" id="PTHR11652">
    <property type="entry name" value="30S RIBOSOMAL PROTEIN S12 FAMILY MEMBER"/>
    <property type="match status" value="1"/>
</dbReference>
<dbReference type="Pfam" id="PF00164">
    <property type="entry name" value="Ribosom_S12_S23"/>
    <property type="match status" value="1"/>
</dbReference>
<dbReference type="PIRSF" id="PIRSF002133">
    <property type="entry name" value="Ribosomal_S12/S23"/>
    <property type="match status" value="1"/>
</dbReference>
<dbReference type="PRINTS" id="PR01034">
    <property type="entry name" value="RIBOSOMALS12"/>
</dbReference>
<dbReference type="SUPFAM" id="SSF50249">
    <property type="entry name" value="Nucleic acid-binding proteins"/>
    <property type="match status" value="1"/>
</dbReference>
<dbReference type="PROSITE" id="PS00055">
    <property type="entry name" value="RIBOSOMAL_S12"/>
    <property type="match status" value="1"/>
</dbReference>